<comment type="function">
    <text evidence="1">Hydrolyzes ribosome-free peptidyl-tRNAs (with 1 or more amino acids incorporated), which drop off the ribosome during protein synthesis, or as a result of ribosome stalling.</text>
</comment>
<comment type="function">
    <text evidence="1">Catalyzes the release of premature peptidyl moieties from peptidyl-tRNA molecules trapped in stalled 50S ribosomal subunits, and thus maintains levels of free tRNAs and 50S ribosomes.</text>
</comment>
<comment type="catalytic activity">
    <reaction evidence="1">
        <text>an N-acyl-L-alpha-aminoacyl-tRNA + H2O = an N-acyl-L-amino acid + a tRNA + H(+)</text>
        <dbReference type="Rhea" id="RHEA:54448"/>
        <dbReference type="Rhea" id="RHEA-COMP:10123"/>
        <dbReference type="Rhea" id="RHEA-COMP:13883"/>
        <dbReference type="ChEBI" id="CHEBI:15377"/>
        <dbReference type="ChEBI" id="CHEBI:15378"/>
        <dbReference type="ChEBI" id="CHEBI:59874"/>
        <dbReference type="ChEBI" id="CHEBI:78442"/>
        <dbReference type="ChEBI" id="CHEBI:138191"/>
        <dbReference type="EC" id="3.1.1.29"/>
    </reaction>
</comment>
<comment type="subunit">
    <text evidence="1">Monomer.</text>
</comment>
<comment type="subcellular location">
    <subcellularLocation>
        <location evidence="1">Cytoplasm</location>
    </subcellularLocation>
</comment>
<comment type="similarity">
    <text evidence="1">Belongs to the PTH family.</text>
</comment>
<evidence type="ECO:0000255" key="1">
    <source>
        <dbReference type="HAMAP-Rule" id="MF_00083"/>
    </source>
</evidence>
<sequence length="179" mass="19963">MVKLVVGIGNPGRQYVWTRHNIGFLLLDSLASRFLGAFREAPRLYASFAKVEISSEAVVLMKPTTYVNLTGKAVLAAKKFFDVSMEDILVVADDINREFGFVRFRQDCGSGGHNGIKNTTQILQSNHYWQLRLGVGRPSYPGAEGVADYVLSSFSLNEKEKLNDFLEKGIEEILPWLGC</sequence>
<name>PTH_CHLT2</name>
<gene>
    <name evidence="1" type="primary">pth</name>
    <name type="ordered locus">CTL0169</name>
</gene>
<accession>B0B927</accession>
<reference key="1">
    <citation type="journal article" date="2008" name="Genome Res.">
        <title>Chlamydia trachomatis: genome sequence analysis of lymphogranuloma venereum isolates.</title>
        <authorList>
            <person name="Thomson N.R."/>
            <person name="Holden M.T.G."/>
            <person name="Carder C."/>
            <person name="Lennard N."/>
            <person name="Lockey S.J."/>
            <person name="Marsh P."/>
            <person name="Skipp P."/>
            <person name="O'Connor C.D."/>
            <person name="Goodhead I."/>
            <person name="Norbertzcak H."/>
            <person name="Harris B."/>
            <person name="Ormond D."/>
            <person name="Rance R."/>
            <person name="Quail M.A."/>
            <person name="Parkhill J."/>
            <person name="Stephens R.S."/>
            <person name="Clarke I.N."/>
        </authorList>
    </citation>
    <scope>NUCLEOTIDE SEQUENCE [LARGE SCALE GENOMIC DNA]</scope>
    <source>
        <strain>ATCC VR-902B / DSM 19102 / 434/Bu</strain>
    </source>
</reference>
<keyword id="KW-0963">Cytoplasm</keyword>
<keyword id="KW-0378">Hydrolase</keyword>
<keyword id="KW-0694">RNA-binding</keyword>
<keyword id="KW-0820">tRNA-binding</keyword>
<organism>
    <name type="scientific">Chlamydia trachomatis serovar L2 (strain ATCC VR-902B / DSM 19102 / 434/Bu)</name>
    <dbReference type="NCBI Taxonomy" id="471472"/>
    <lineage>
        <taxon>Bacteria</taxon>
        <taxon>Pseudomonadati</taxon>
        <taxon>Chlamydiota</taxon>
        <taxon>Chlamydiia</taxon>
        <taxon>Chlamydiales</taxon>
        <taxon>Chlamydiaceae</taxon>
        <taxon>Chlamydia/Chlamydophila group</taxon>
        <taxon>Chlamydia</taxon>
    </lineage>
</organism>
<proteinExistence type="inferred from homology"/>
<dbReference type="EC" id="3.1.1.29" evidence="1"/>
<dbReference type="EMBL" id="AM884176">
    <property type="protein sequence ID" value="CAP03614.1"/>
    <property type="molecule type" value="Genomic_DNA"/>
</dbReference>
<dbReference type="RefSeq" id="WP_009873224.1">
    <property type="nucleotide sequence ID" value="NC_010287.1"/>
</dbReference>
<dbReference type="RefSeq" id="YP_001654260.1">
    <property type="nucleotide sequence ID" value="NC_010287.1"/>
</dbReference>
<dbReference type="SMR" id="B0B927"/>
<dbReference type="KEGG" id="ctb:CTL0169"/>
<dbReference type="PATRIC" id="fig|471472.4.peg.183"/>
<dbReference type="HOGENOM" id="CLU_062456_3_1_0"/>
<dbReference type="Proteomes" id="UP001154402">
    <property type="component" value="Chromosome"/>
</dbReference>
<dbReference type="GO" id="GO:0005737">
    <property type="term" value="C:cytoplasm"/>
    <property type="evidence" value="ECO:0007669"/>
    <property type="project" value="UniProtKB-SubCell"/>
</dbReference>
<dbReference type="GO" id="GO:0004045">
    <property type="term" value="F:peptidyl-tRNA hydrolase activity"/>
    <property type="evidence" value="ECO:0007669"/>
    <property type="project" value="UniProtKB-UniRule"/>
</dbReference>
<dbReference type="GO" id="GO:0000049">
    <property type="term" value="F:tRNA binding"/>
    <property type="evidence" value="ECO:0007669"/>
    <property type="project" value="UniProtKB-UniRule"/>
</dbReference>
<dbReference type="GO" id="GO:0006515">
    <property type="term" value="P:protein quality control for misfolded or incompletely synthesized proteins"/>
    <property type="evidence" value="ECO:0007669"/>
    <property type="project" value="UniProtKB-UniRule"/>
</dbReference>
<dbReference type="GO" id="GO:0072344">
    <property type="term" value="P:rescue of stalled ribosome"/>
    <property type="evidence" value="ECO:0007669"/>
    <property type="project" value="UniProtKB-UniRule"/>
</dbReference>
<dbReference type="CDD" id="cd00462">
    <property type="entry name" value="PTH"/>
    <property type="match status" value="1"/>
</dbReference>
<dbReference type="FunFam" id="3.40.50.1470:FF:000001">
    <property type="entry name" value="Peptidyl-tRNA hydrolase"/>
    <property type="match status" value="1"/>
</dbReference>
<dbReference type="Gene3D" id="3.40.50.1470">
    <property type="entry name" value="Peptidyl-tRNA hydrolase"/>
    <property type="match status" value="1"/>
</dbReference>
<dbReference type="HAMAP" id="MF_00083">
    <property type="entry name" value="Pept_tRNA_hydro_bact"/>
    <property type="match status" value="1"/>
</dbReference>
<dbReference type="InterPro" id="IPR001328">
    <property type="entry name" value="Pept_tRNA_hydro"/>
</dbReference>
<dbReference type="InterPro" id="IPR018171">
    <property type="entry name" value="Pept_tRNA_hydro_CS"/>
</dbReference>
<dbReference type="InterPro" id="IPR036416">
    <property type="entry name" value="Pept_tRNA_hydro_sf"/>
</dbReference>
<dbReference type="NCBIfam" id="TIGR00447">
    <property type="entry name" value="pth"/>
    <property type="match status" value="1"/>
</dbReference>
<dbReference type="PANTHER" id="PTHR17224">
    <property type="entry name" value="PEPTIDYL-TRNA HYDROLASE"/>
    <property type="match status" value="1"/>
</dbReference>
<dbReference type="PANTHER" id="PTHR17224:SF1">
    <property type="entry name" value="PEPTIDYL-TRNA HYDROLASE"/>
    <property type="match status" value="1"/>
</dbReference>
<dbReference type="Pfam" id="PF01195">
    <property type="entry name" value="Pept_tRNA_hydro"/>
    <property type="match status" value="1"/>
</dbReference>
<dbReference type="SUPFAM" id="SSF53178">
    <property type="entry name" value="Peptidyl-tRNA hydrolase-like"/>
    <property type="match status" value="1"/>
</dbReference>
<dbReference type="PROSITE" id="PS01195">
    <property type="entry name" value="PEPT_TRNA_HYDROL_1"/>
    <property type="match status" value="1"/>
</dbReference>
<dbReference type="PROSITE" id="PS01196">
    <property type="entry name" value="PEPT_TRNA_HYDROL_2"/>
    <property type="match status" value="1"/>
</dbReference>
<protein>
    <recommendedName>
        <fullName evidence="1">Peptidyl-tRNA hydrolase</fullName>
        <shortName evidence="1">Pth</shortName>
        <ecNumber evidence="1">3.1.1.29</ecNumber>
    </recommendedName>
</protein>
<feature type="chain" id="PRO_1000092925" description="Peptidyl-tRNA hydrolase">
    <location>
        <begin position="1"/>
        <end position="179"/>
    </location>
</feature>
<feature type="active site" description="Proton acceptor" evidence="1">
    <location>
        <position position="20"/>
    </location>
</feature>
<feature type="binding site" evidence="1">
    <location>
        <position position="15"/>
    </location>
    <ligand>
        <name>tRNA</name>
        <dbReference type="ChEBI" id="CHEBI:17843"/>
    </ligand>
</feature>
<feature type="binding site" evidence="1">
    <location>
        <position position="66"/>
    </location>
    <ligand>
        <name>tRNA</name>
        <dbReference type="ChEBI" id="CHEBI:17843"/>
    </ligand>
</feature>
<feature type="binding site" evidence="1">
    <location>
        <position position="68"/>
    </location>
    <ligand>
        <name>tRNA</name>
        <dbReference type="ChEBI" id="CHEBI:17843"/>
    </ligand>
</feature>
<feature type="binding site" evidence="1">
    <location>
        <position position="114"/>
    </location>
    <ligand>
        <name>tRNA</name>
        <dbReference type="ChEBI" id="CHEBI:17843"/>
    </ligand>
</feature>
<feature type="site" description="Discriminates between blocked and unblocked aminoacyl-tRNA" evidence="1">
    <location>
        <position position="10"/>
    </location>
</feature>
<feature type="site" description="Stabilizes the basic form of H active site to accept a proton" evidence="1">
    <location>
        <position position="93"/>
    </location>
</feature>